<dbReference type="EMBL" id="CR760400">
    <property type="protein sequence ID" value="CAJ82699.1"/>
    <property type="molecule type" value="mRNA"/>
</dbReference>
<dbReference type="EMBL" id="BC121995">
    <property type="protein sequence ID" value="AAI21996.1"/>
    <property type="molecule type" value="mRNA"/>
</dbReference>
<dbReference type="RefSeq" id="NP_001016642.1">
    <property type="nucleotide sequence ID" value="NM_001016642.3"/>
</dbReference>
<dbReference type="RefSeq" id="XP_012812447.1">
    <property type="nucleotide sequence ID" value="XM_012956993.3"/>
</dbReference>
<dbReference type="SMR" id="Q28IG8"/>
<dbReference type="FunCoup" id="Q28IG8">
    <property type="interactions" value="2378"/>
</dbReference>
<dbReference type="STRING" id="8364.ENSXETP00000039017"/>
<dbReference type="PaxDb" id="8364-ENSXETP00000056766"/>
<dbReference type="DNASU" id="549396"/>
<dbReference type="GeneID" id="549396"/>
<dbReference type="KEGG" id="xtr:549396"/>
<dbReference type="AGR" id="Xenbase:XB-GENE-965017"/>
<dbReference type="CTD" id="6399"/>
<dbReference type="Xenbase" id="XB-GENE-965017">
    <property type="gene designation" value="trappc2"/>
</dbReference>
<dbReference type="eggNOG" id="KOG3487">
    <property type="taxonomic scope" value="Eukaryota"/>
</dbReference>
<dbReference type="InParanoid" id="Q28IG8"/>
<dbReference type="OMA" id="RYMNQFI"/>
<dbReference type="OrthoDB" id="10252102at2759"/>
<dbReference type="Reactome" id="R-XTR-204005">
    <property type="pathway name" value="COPII-mediated vesicle transport"/>
</dbReference>
<dbReference type="Proteomes" id="UP000008143">
    <property type="component" value="Chromosome 2"/>
</dbReference>
<dbReference type="GO" id="GO:0005793">
    <property type="term" value="C:endoplasmic reticulum-Golgi intermediate compartment"/>
    <property type="evidence" value="ECO:0007669"/>
    <property type="project" value="UniProtKB-SubCell"/>
</dbReference>
<dbReference type="GO" id="GO:0005634">
    <property type="term" value="C:nucleus"/>
    <property type="evidence" value="ECO:0000250"/>
    <property type="project" value="UniProtKB"/>
</dbReference>
<dbReference type="GO" id="GO:0048471">
    <property type="term" value="C:perinuclear region of cytoplasm"/>
    <property type="evidence" value="ECO:0007669"/>
    <property type="project" value="UniProtKB-SubCell"/>
</dbReference>
<dbReference type="GO" id="GO:0006888">
    <property type="term" value="P:endoplasmic reticulum to Golgi vesicle-mediated transport"/>
    <property type="evidence" value="ECO:0007669"/>
    <property type="project" value="InterPro"/>
</dbReference>
<dbReference type="CDD" id="cd14825">
    <property type="entry name" value="TRAPPC2_sedlin"/>
    <property type="match status" value="1"/>
</dbReference>
<dbReference type="FunFam" id="3.30.450.70:FF:000001">
    <property type="entry name" value="Trafficking protein particle complex subunit 2"/>
    <property type="match status" value="1"/>
</dbReference>
<dbReference type="Gene3D" id="3.30.450.70">
    <property type="match status" value="1"/>
</dbReference>
<dbReference type="InterPro" id="IPR011012">
    <property type="entry name" value="Longin-like_dom_sf"/>
</dbReference>
<dbReference type="InterPro" id="IPR006722">
    <property type="entry name" value="Sedlin"/>
</dbReference>
<dbReference type="PANTHER" id="PTHR12403">
    <property type="entry name" value="TRAFFICKING PROTEIN PARTICLE COMPLEX SUBUNIT 2"/>
    <property type="match status" value="1"/>
</dbReference>
<dbReference type="Pfam" id="PF04628">
    <property type="entry name" value="Sedlin_N"/>
    <property type="match status" value="1"/>
</dbReference>
<dbReference type="SUPFAM" id="SSF64356">
    <property type="entry name" value="SNARE-like"/>
    <property type="match status" value="1"/>
</dbReference>
<organism>
    <name type="scientific">Xenopus tropicalis</name>
    <name type="common">Western clawed frog</name>
    <name type="synonym">Silurana tropicalis</name>
    <dbReference type="NCBI Taxonomy" id="8364"/>
    <lineage>
        <taxon>Eukaryota</taxon>
        <taxon>Metazoa</taxon>
        <taxon>Chordata</taxon>
        <taxon>Craniata</taxon>
        <taxon>Vertebrata</taxon>
        <taxon>Euteleostomi</taxon>
        <taxon>Amphibia</taxon>
        <taxon>Batrachia</taxon>
        <taxon>Anura</taxon>
        <taxon>Pipoidea</taxon>
        <taxon>Pipidae</taxon>
        <taxon>Xenopodinae</taxon>
        <taxon>Xenopus</taxon>
        <taxon>Silurana</taxon>
    </lineage>
</organism>
<evidence type="ECO:0000250" key="1"/>
<evidence type="ECO:0000250" key="2">
    <source>
        <dbReference type="UniProtKB" id="P0DI81"/>
    </source>
</evidence>
<evidence type="ECO:0000305" key="3"/>
<reference key="1">
    <citation type="submission" date="2006-10" db="EMBL/GenBank/DDBJ databases">
        <authorList>
            <consortium name="Sanger Xenopus tropicalis EST/cDNA project"/>
        </authorList>
    </citation>
    <scope>NUCLEOTIDE SEQUENCE [LARGE SCALE MRNA]</scope>
    <source>
        <tissue>Neurula</tissue>
    </source>
</reference>
<reference key="2">
    <citation type="submission" date="2006-08" db="EMBL/GenBank/DDBJ databases">
        <authorList>
            <consortium name="NIH - Xenopus Gene Collection (XGC) project"/>
        </authorList>
    </citation>
    <scope>NUCLEOTIDE SEQUENCE [LARGE SCALE MRNA]</scope>
    <source>
        <strain>N6</strain>
        <tissue>Skin</tissue>
    </source>
</reference>
<feature type="chain" id="PRO_0000412458" description="Trafficking protein particle complex subunit 2">
    <location>
        <begin position="1"/>
        <end position="140"/>
    </location>
</feature>
<proteinExistence type="evidence at transcript level"/>
<comment type="function">
    <text evidence="1">May play a role in vesicular transport from endoplasmic reticulum to Golgi.</text>
</comment>
<comment type="subunit">
    <text evidence="1">Part of the multisubunit TRAPP (transport protein particle) complex.</text>
</comment>
<comment type="subcellular location">
    <subcellularLocation>
        <location evidence="2">Cytoplasm</location>
        <location evidence="2">Perinuclear region</location>
    </subcellularLocation>
    <subcellularLocation>
        <location evidence="2">Nucleus</location>
    </subcellularLocation>
    <subcellularLocation>
        <location evidence="2">Endoplasmic reticulum-Golgi intermediate compartment</location>
    </subcellularLocation>
    <subcellularLocation>
        <location evidence="2">Cytoplasm</location>
    </subcellularLocation>
    <text evidence="2">Localized in perinuclear granular structures.</text>
</comment>
<comment type="similarity">
    <text evidence="3">Belongs to the TRAPP small subunits family. Sedlin subfamily.</text>
</comment>
<name>TPPC2_XENTR</name>
<protein>
    <recommendedName>
        <fullName>Trafficking protein particle complex subunit 2</fullName>
    </recommendedName>
</protein>
<keyword id="KW-0963">Cytoplasm</keyword>
<keyword id="KW-0931">ER-Golgi transport</keyword>
<keyword id="KW-0539">Nucleus</keyword>
<keyword id="KW-1185">Reference proteome</keyword>
<keyword id="KW-0813">Transport</keyword>
<sequence length="140" mass="16545">MSGSFYFVIVGHHDNPVFEMEFLPQGKTESKDDHRHLNQFIAHAALDLVDENMWLSNNMYLKTVDKFNEWFVSAFVTAGHMRFIMLHDVRQEDGIKNFFNEAYDLYIKFAMNPFYEINSPLRSTAFDRKIQFLGKKHLLS</sequence>
<accession>Q28IG8</accession>
<gene>
    <name type="primary">trappc2</name>
    <name type="ORF">TNeu113o05.1</name>
</gene>